<feature type="chain" id="PRO_0000094166" description="CDP-archaeol synthase">
    <location>
        <begin position="1"/>
        <end position="174"/>
    </location>
</feature>
<feature type="transmembrane region" description="Helical" evidence="1">
    <location>
        <begin position="14"/>
        <end position="34"/>
    </location>
</feature>
<feature type="transmembrane region" description="Helical" evidence="1">
    <location>
        <begin position="59"/>
        <end position="79"/>
    </location>
</feature>
<feature type="transmembrane region" description="Helical" evidence="1">
    <location>
        <begin position="83"/>
        <end position="103"/>
    </location>
</feature>
<feature type="transmembrane region" description="Helical" evidence="1">
    <location>
        <begin position="118"/>
        <end position="138"/>
    </location>
</feature>
<feature type="transmembrane region" description="Helical" evidence="1">
    <location>
        <begin position="149"/>
        <end position="169"/>
    </location>
</feature>
<feature type="strand" evidence="2">
    <location>
        <begin position="9"/>
        <end position="11"/>
    </location>
</feature>
<feature type="helix" evidence="2">
    <location>
        <begin position="14"/>
        <end position="29"/>
    </location>
</feature>
<feature type="helix" evidence="2">
    <location>
        <begin position="31"/>
        <end position="34"/>
    </location>
</feature>
<feature type="turn" evidence="2">
    <location>
        <begin position="40"/>
        <end position="43"/>
    </location>
</feature>
<feature type="strand" evidence="2">
    <location>
        <begin position="49"/>
        <end position="53"/>
    </location>
</feature>
<feature type="helix" evidence="2">
    <location>
        <begin position="59"/>
        <end position="80"/>
    </location>
</feature>
<feature type="helix" evidence="2">
    <location>
        <begin position="84"/>
        <end position="109"/>
    </location>
</feature>
<feature type="helix" evidence="2">
    <location>
        <begin position="121"/>
        <end position="136"/>
    </location>
</feature>
<feature type="helix" evidence="2">
    <location>
        <begin position="143"/>
        <end position="161"/>
    </location>
</feature>
<evidence type="ECO:0000255" key="1">
    <source>
        <dbReference type="HAMAP-Rule" id="MF_01117"/>
    </source>
</evidence>
<evidence type="ECO:0007829" key="2">
    <source>
        <dbReference type="PDB" id="5GUF"/>
    </source>
</evidence>
<protein>
    <recommendedName>
        <fullName evidence="1">CDP-archaeol synthase</fullName>
        <ecNumber evidence="1">2.7.7.67</ecNumber>
    </recommendedName>
    <alternativeName>
        <fullName evidence="1">CDP-2,3-bis-(O-geranylgeranyl)-sn-glycerol synthase</fullName>
    </alternativeName>
</protein>
<comment type="function">
    <text evidence="1">Catalyzes the formation of CDP-2,3-bis-(O-geranylgeranyl)-sn-glycerol (CDP-archaeol) from 2,3-bis-(O-geranylgeranyl)-sn-glycerol 1-phosphate (DGGGP) and CTP. This reaction is the third ether-bond-formation step in the biosynthesis of archaeal membrane lipids.</text>
</comment>
<comment type="catalytic activity">
    <reaction evidence="1">
        <text>2,3-bis-O-(geranylgeranyl)-sn-glycerol 1-phosphate + CTP + H(+) = CDP-2,3-bis-O-(geranylgeranyl)-sn-glycerol + diphosphate</text>
        <dbReference type="Rhea" id="RHEA:25690"/>
        <dbReference type="ChEBI" id="CHEBI:15378"/>
        <dbReference type="ChEBI" id="CHEBI:33019"/>
        <dbReference type="ChEBI" id="CHEBI:37563"/>
        <dbReference type="ChEBI" id="CHEBI:58837"/>
        <dbReference type="ChEBI" id="CHEBI:58838"/>
        <dbReference type="EC" id="2.7.7.67"/>
    </reaction>
</comment>
<comment type="cofactor">
    <cofactor evidence="1">
        <name>Mg(2+)</name>
        <dbReference type="ChEBI" id="CHEBI:18420"/>
    </cofactor>
</comment>
<comment type="pathway">
    <text evidence="1">Membrane lipid metabolism; glycerophospholipid metabolism.</text>
</comment>
<comment type="subcellular location">
    <subcellularLocation>
        <location evidence="1">Cell membrane</location>
        <topology evidence="1">Multi-pass membrane protein</topology>
    </subcellularLocation>
</comment>
<comment type="similarity">
    <text evidence="1">Belongs to the CDP-archaeol synthase family.</text>
</comment>
<proteinExistence type="evidence at protein level"/>
<keyword id="KW-0002">3D-structure</keyword>
<keyword id="KW-1003">Cell membrane</keyword>
<keyword id="KW-0444">Lipid biosynthesis</keyword>
<keyword id="KW-0443">Lipid metabolism</keyword>
<keyword id="KW-0460">Magnesium</keyword>
<keyword id="KW-0472">Membrane</keyword>
<keyword id="KW-0594">Phospholipid biosynthesis</keyword>
<keyword id="KW-1208">Phospholipid metabolism</keyword>
<keyword id="KW-1185">Reference proteome</keyword>
<keyword id="KW-0808">Transferase</keyword>
<keyword id="KW-0812">Transmembrane</keyword>
<keyword id="KW-1133">Transmembrane helix</keyword>
<sequence>MALELAVDWRIDNILEAIILMLPAMIANATPVVAGGRRPVDMGVVLPDGRRLLGDGKTIEGLLAGFAAGSAAGVLAALASGNMLLAVHSPAIALGALAGDMAGSFVKRRLGIERGRPAPLLDQLDFYLGALAVSIALGYTWTPRVAVEAAAAVLLLHLAANITAYLLGLKKVPW</sequence>
<accession>Q9YF05</accession>
<gene>
    <name evidence="1" type="primary">carS</name>
    <name type="ordered locus">APE_0433</name>
</gene>
<reference key="1">
    <citation type="journal article" date="1999" name="DNA Res.">
        <title>Complete genome sequence of an aerobic hyper-thermophilic crenarchaeon, Aeropyrum pernix K1.</title>
        <authorList>
            <person name="Kawarabayasi Y."/>
            <person name="Hino Y."/>
            <person name="Horikawa H."/>
            <person name="Yamazaki S."/>
            <person name="Haikawa Y."/>
            <person name="Jin-no K."/>
            <person name="Takahashi M."/>
            <person name="Sekine M."/>
            <person name="Baba S."/>
            <person name="Ankai A."/>
            <person name="Kosugi H."/>
            <person name="Hosoyama A."/>
            <person name="Fukui S."/>
            <person name="Nagai Y."/>
            <person name="Nishijima K."/>
            <person name="Nakazawa H."/>
            <person name="Takamiya M."/>
            <person name="Masuda S."/>
            <person name="Funahashi T."/>
            <person name="Tanaka T."/>
            <person name="Kudoh Y."/>
            <person name="Yamazaki J."/>
            <person name="Kushida N."/>
            <person name="Oguchi A."/>
            <person name="Aoki K."/>
            <person name="Kubota K."/>
            <person name="Nakamura Y."/>
            <person name="Nomura N."/>
            <person name="Sako Y."/>
            <person name="Kikuchi H."/>
        </authorList>
    </citation>
    <scope>NUCLEOTIDE SEQUENCE [LARGE SCALE GENOMIC DNA]</scope>
    <source>
        <strain>ATCC 700893 / DSM 11879 / JCM 9820 / NBRC 100138 / K1</strain>
    </source>
</reference>
<dbReference type="EC" id="2.7.7.67" evidence="1"/>
<dbReference type="EMBL" id="BA000002">
    <property type="protein sequence ID" value="BAA79391.1"/>
    <property type="molecule type" value="Genomic_DNA"/>
</dbReference>
<dbReference type="PIR" id="C72737">
    <property type="entry name" value="C72737"/>
</dbReference>
<dbReference type="RefSeq" id="WP_010865738.1">
    <property type="nucleotide sequence ID" value="NC_000854.2"/>
</dbReference>
<dbReference type="PDB" id="5GUF">
    <property type="method" value="X-ray"/>
    <property type="resolution" value="2.40 A"/>
    <property type="chains" value="A=1-174"/>
</dbReference>
<dbReference type="PDBsum" id="5GUF"/>
<dbReference type="SMR" id="Q9YF05"/>
<dbReference type="STRING" id="272557.APE_0433"/>
<dbReference type="EnsemblBacteria" id="BAA79391">
    <property type="protein sequence ID" value="BAA79391"/>
    <property type="gene ID" value="APE_0433"/>
</dbReference>
<dbReference type="GeneID" id="1444621"/>
<dbReference type="KEGG" id="ape:APE_0433"/>
<dbReference type="eggNOG" id="arCOG04106">
    <property type="taxonomic scope" value="Archaea"/>
</dbReference>
<dbReference type="BioCyc" id="MetaCyc:MONOMER-22059"/>
<dbReference type="BRENDA" id="2.7.7.67">
    <property type="organism ID" value="171"/>
</dbReference>
<dbReference type="UniPathway" id="UPA00940"/>
<dbReference type="Proteomes" id="UP000002518">
    <property type="component" value="Chromosome"/>
</dbReference>
<dbReference type="GO" id="GO:0005886">
    <property type="term" value="C:plasma membrane"/>
    <property type="evidence" value="ECO:0007669"/>
    <property type="project" value="UniProtKB-SubCell"/>
</dbReference>
<dbReference type="GO" id="GO:0043338">
    <property type="term" value="F:CDP-2,3-bis-(O-geranylgeranyl)-sn-glycerol synthase activity"/>
    <property type="evidence" value="ECO:0007669"/>
    <property type="project" value="UniProtKB-EC"/>
</dbReference>
<dbReference type="GO" id="GO:0046474">
    <property type="term" value="P:glycerophospholipid biosynthetic process"/>
    <property type="evidence" value="ECO:0007669"/>
    <property type="project" value="UniProtKB-UniRule"/>
</dbReference>
<dbReference type="HAMAP" id="MF_01117">
    <property type="entry name" value="CDP_archaeol_synth"/>
    <property type="match status" value="1"/>
</dbReference>
<dbReference type="InterPro" id="IPR032690">
    <property type="entry name" value="CarS"/>
</dbReference>
<dbReference type="InterPro" id="IPR002726">
    <property type="entry name" value="CarS_archaea"/>
</dbReference>
<dbReference type="NCBIfam" id="NF003114">
    <property type="entry name" value="PRK04032.1"/>
    <property type="match status" value="1"/>
</dbReference>
<dbReference type="PANTHER" id="PTHR39650">
    <property type="entry name" value="CDP-ARCHAEOL SYNTHASE"/>
    <property type="match status" value="1"/>
</dbReference>
<dbReference type="PANTHER" id="PTHR39650:SF1">
    <property type="entry name" value="CDP-ARCHAEOL SYNTHASE"/>
    <property type="match status" value="1"/>
</dbReference>
<dbReference type="Pfam" id="PF01864">
    <property type="entry name" value="CarS-like"/>
    <property type="match status" value="1"/>
</dbReference>
<name>CDPAS_AERPE</name>
<organism>
    <name type="scientific">Aeropyrum pernix (strain ATCC 700893 / DSM 11879 / JCM 9820 / NBRC 100138 / K1)</name>
    <dbReference type="NCBI Taxonomy" id="272557"/>
    <lineage>
        <taxon>Archaea</taxon>
        <taxon>Thermoproteota</taxon>
        <taxon>Thermoprotei</taxon>
        <taxon>Desulfurococcales</taxon>
        <taxon>Desulfurococcaceae</taxon>
        <taxon>Aeropyrum</taxon>
    </lineage>
</organism>